<organism>
    <name type="scientific">Sulfolobus islandicus filamentous virus (isolate Iceland/Hveragerdi)</name>
    <name type="common">SIFV</name>
    <dbReference type="NCBI Taxonomy" id="654908"/>
    <lineage>
        <taxon>Viruses</taxon>
        <taxon>Adnaviria</taxon>
        <taxon>Zilligvirae</taxon>
        <taxon>Taleaviricota</taxon>
        <taxon>Tokiviricetes</taxon>
        <taxon>Ligamenvirales</taxon>
        <taxon>Lipothrixviridae</taxon>
        <taxon>Betalipothrixvirus</taxon>
        <taxon>Sulfolobus islandicus filamentous virus</taxon>
    </lineage>
</organism>
<reference key="1">
    <citation type="journal article" date="2000" name="Virology">
        <title>A novel lipothrixvirus, SIFV, of the extremely thermophilic crenarchaeon Sulfolobus.</title>
        <authorList>
            <person name="Arnold H.P."/>
            <person name="Zillig W."/>
            <person name="Ziese U."/>
            <person name="Holz I."/>
            <person name="Crosby M."/>
            <person name="Utterback T."/>
            <person name="Weidmann J.F."/>
            <person name="Umayam L.A."/>
            <person name="Teffera K."/>
            <person name="Kristjanson J.K."/>
            <person name="Klenk H.P."/>
            <person name="Nelson K.E."/>
            <person name="Fraser C.M."/>
        </authorList>
    </citation>
    <scope>NUCLEOTIDE SEQUENCE [GENOMIC DNA]</scope>
</reference>
<keyword id="KW-1185">Reference proteome</keyword>
<name>Y029_SIFVH</name>
<gene>
    <name type="primary">SIFV0029</name>
</gene>
<proteinExistence type="predicted"/>
<feature type="chain" id="PRO_0000385434" description="Uncharacterized protein 29">
    <location>
        <begin position="1"/>
        <end position="96"/>
    </location>
</feature>
<accession>Q914K1</accession>
<dbReference type="EMBL" id="AF440571">
    <property type="protein sequence ID" value="AAL27740.1"/>
    <property type="molecule type" value="Genomic_DNA"/>
</dbReference>
<dbReference type="RefSeq" id="NP_445694.1">
    <property type="nucleotide sequence ID" value="NC_003214.2"/>
</dbReference>
<dbReference type="SMR" id="Q914K1"/>
<dbReference type="GeneID" id="922330"/>
<dbReference type="KEGG" id="vg:922330"/>
<dbReference type="Proteomes" id="UP000007017">
    <property type="component" value="Segment"/>
</dbReference>
<organismHost>
    <name type="scientific">Saccharolobus islandicus</name>
    <name type="common">Sulfolobus islandicus</name>
    <dbReference type="NCBI Taxonomy" id="43080"/>
</organismHost>
<protein>
    <recommendedName>
        <fullName>Uncharacterized protein 29</fullName>
    </recommendedName>
</protein>
<sequence>MQLKATSFRANEKIIFVLNSNKLFCETYDEFLNRLIDECEGAINYANNDITETLSIYSFKLSSETIGKLSTIAKKYRISRSEAFRKLIIAKAEGLC</sequence>